<accession>Q67JV1</accession>
<comment type="similarity">
    <text evidence="1">Belongs to the universal ribosomal protein uL29 family.</text>
</comment>
<keyword id="KW-1185">Reference proteome</keyword>
<keyword id="KW-0687">Ribonucleoprotein</keyword>
<keyword id="KW-0689">Ribosomal protein</keyword>
<proteinExistence type="inferred from homology"/>
<organism>
    <name type="scientific">Symbiobacterium thermophilum (strain DSM 24528 / JCM 14929 / IAM 14863 / T)</name>
    <dbReference type="NCBI Taxonomy" id="292459"/>
    <lineage>
        <taxon>Bacteria</taxon>
        <taxon>Bacillati</taxon>
        <taxon>Bacillota</taxon>
        <taxon>Clostridia</taxon>
        <taxon>Eubacteriales</taxon>
        <taxon>Symbiobacteriaceae</taxon>
        <taxon>Symbiobacterium</taxon>
    </lineage>
</organism>
<dbReference type="EMBL" id="AP006840">
    <property type="protein sequence ID" value="BAD42049.1"/>
    <property type="molecule type" value="Genomic_DNA"/>
</dbReference>
<dbReference type="RefSeq" id="WP_011197182.1">
    <property type="nucleotide sequence ID" value="NC_006177.1"/>
</dbReference>
<dbReference type="SMR" id="Q67JV1"/>
<dbReference type="STRING" id="292459.STH3067"/>
<dbReference type="KEGG" id="sth:STH3067"/>
<dbReference type="eggNOG" id="COG0255">
    <property type="taxonomic scope" value="Bacteria"/>
</dbReference>
<dbReference type="HOGENOM" id="CLU_158491_5_2_9"/>
<dbReference type="OrthoDB" id="9815192at2"/>
<dbReference type="Proteomes" id="UP000000417">
    <property type="component" value="Chromosome"/>
</dbReference>
<dbReference type="GO" id="GO:0022625">
    <property type="term" value="C:cytosolic large ribosomal subunit"/>
    <property type="evidence" value="ECO:0007669"/>
    <property type="project" value="TreeGrafter"/>
</dbReference>
<dbReference type="GO" id="GO:0003735">
    <property type="term" value="F:structural constituent of ribosome"/>
    <property type="evidence" value="ECO:0007669"/>
    <property type="project" value="InterPro"/>
</dbReference>
<dbReference type="GO" id="GO:0006412">
    <property type="term" value="P:translation"/>
    <property type="evidence" value="ECO:0007669"/>
    <property type="project" value="UniProtKB-UniRule"/>
</dbReference>
<dbReference type="CDD" id="cd00427">
    <property type="entry name" value="Ribosomal_L29_HIP"/>
    <property type="match status" value="1"/>
</dbReference>
<dbReference type="FunFam" id="1.10.287.310:FF:000001">
    <property type="entry name" value="50S ribosomal protein L29"/>
    <property type="match status" value="1"/>
</dbReference>
<dbReference type="Gene3D" id="1.10.287.310">
    <property type="match status" value="1"/>
</dbReference>
<dbReference type="HAMAP" id="MF_00374">
    <property type="entry name" value="Ribosomal_uL29"/>
    <property type="match status" value="1"/>
</dbReference>
<dbReference type="InterPro" id="IPR050063">
    <property type="entry name" value="Ribosomal_protein_uL29"/>
</dbReference>
<dbReference type="InterPro" id="IPR001854">
    <property type="entry name" value="Ribosomal_uL29"/>
</dbReference>
<dbReference type="InterPro" id="IPR036049">
    <property type="entry name" value="Ribosomal_uL29_sf"/>
</dbReference>
<dbReference type="NCBIfam" id="TIGR00012">
    <property type="entry name" value="L29"/>
    <property type="match status" value="1"/>
</dbReference>
<dbReference type="PANTHER" id="PTHR10916">
    <property type="entry name" value="60S RIBOSOMAL PROTEIN L35/50S RIBOSOMAL PROTEIN L29"/>
    <property type="match status" value="1"/>
</dbReference>
<dbReference type="PANTHER" id="PTHR10916:SF0">
    <property type="entry name" value="LARGE RIBOSOMAL SUBUNIT PROTEIN UL29C"/>
    <property type="match status" value="1"/>
</dbReference>
<dbReference type="Pfam" id="PF00831">
    <property type="entry name" value="Ribosomal_L29"/>
    <property type="match status" value="1"/>
</dbReference>
<dbReference type="SUPFAM" id="SSF46561">
    <property type="entry name" value="Ribosomal protein L29 (L29p)"/>
    <property type="match status" value="1"/>
</dbReference>
<protein>
    <recommendedName>
        <fullName evidence="1">Large ribosomal subunit protein uL29</fullName>
    </recommendedName>
    <alternativeName>
        <fullName evidence="2">50S ribosomal protein L29</fullName>
    </alternativeName>
</protein>
<sequence length="70" mass="8199">MKVKEIREMSTEEIKAKVAELKEELFNLRFQLAVNNLENTARIREVRRAIAQCKTVIRERELKAQGEVKA</sequence>
<gene>
    <name evidence="1" type="primary">rpmC</name>
    <name type="ordered locus">STH3067</name>
</gene>
<name>RL29_SYMTH</name>
<reference key="1">
    <citation type="journal article" date="2004" name="Nucleic Acids Res.">
        <title>Genome sequence of Symbiobacterium thermophilum, an uncultivable bacterium that depends on microbial commensalism.</title>
        <authorList>
            <person name="Ueda K."/>
            <person name="Yamashita A."/>
            <person name="Ishikawa J."/>
            <person name="Shimada M."/>
            <person name="Watsuji T."/>
            <person name="Morimura K."/>
            <person name="Ikeda H."/>
            <person name="Hattori M."/>
            <person name="Beppu T."/>
        </authorList>
    </citation>
    <scope>NUCLEOTIDE SEQUENCE [LARGE SCALE GENOMIC DNA]</scope>
    <source>
        <strain>DSM 24528 / JCM 14929 / IAM 14863 / T</strain>
    </source>
</reference>
<evidence type="ECO:0000255" key="1">
    <source>
        <dbReference type="HAMAP-Rule" id="MF_00374"/>
    </source>
</evidence>
<evidence type="ECO:0000305" key="2"/>
<feature type="chain" id="PRO_0000130476" description="Large ribosomal subunit protein uL29">
    <location>
        <begin position="1"/>
        <end position="70"/>
    </location>
</feature>